<feature type="signal peptide" evidence="2">
    <location>
        <begin position="1"/>
        <end position="23"/>
    </location>
</feature>
<feature type="chain" id="PRO_0000026935" description="Probable periplasmic serine endoprotease DegP-like">
    <location>
        <begin position="24"/>
        <end position="513"/>
    </location>
</feature>
<feature type="domain" description="PDZ 1" evidence="3">
    <location>
        <begin position="290"/>
        <end position="381"/>
    </location>
</feature>
<feature type="domain" description="PDZ 2" evidence="3">
    <location>
        <begin position="418"/>
        <end position="502"/>
    </location>
</feature>
<feature type="region of interest" description="Serine protease">
    <location>
        <begin position="124"/>
        <end position="289"/>
    </location>
</feature>
<feature type="active site" description="Charge relay system" evidence="2">
    <location>
        <position position="139"/>
    </location>
</feature>
<feature type="active site" description="Charge relay system" evidence="2">
    <location>
        <position position="169"/>
    </location>
</feature>
<feature type="active site" description="Charge relay system" evidence="2">
    <location>
        <position position="247"/>
    </location>
</feature>
<feature type="binding site" evidence="1">
    <location>
        <begin position="245"/>
        <end position="247"/>
    </location>
    <ligand>
        <name>substrate</name>
    </ligand>
</feature>
<feature type="binding site" evidence="1">
    <location>
        <begin position="302"/>
        <end position="306"/>
    </location>
    <ligand>
        <name>substrate</name>
    </ligand>
</feature>
<name>DEGPL_RICPR</name>
<protein>
    <recommendedName>
        <fullName>Probable periplasmic serine endoprotease DegP-like</fullName>
        <ecNumber>3.4.21.107</ecNumber>
    </recommendedName>
    <alternativeName>
        <fullName>Protease Do</fullName>
    </alternativeName>
</protein>
<gene>
    <name type="primary">htrA</name>
    <name type="ordered locus">RP124</name>
</gene>
<dbReference type="EC" id="3.4.21.107"/>
<dbReference type="EMBL" id="AJ235270">
    <property type="protein sequence ID" value="CAA14593.1"/>
    <property type="molecule type" value="Genomic_DNA"/>
</dbReference>
<dbReference type="EMBL" id="Y11782">
    <property type="protein sequence ID" value="CAA72471.1"/>
    <property type="molecule type" value="Genomic_DNA"/>
</dbReference>
<dbReference type="PIR" id="B71722">
    <property type="entry name" value="B71722"/>
</dbReference>
<dbReference type="RefSeq" id="NP_220516.1">
    <property type="nucleotide sequence ID" value="NC_000963.1"/>
</dbReference>
<dbReference type="RefSeq" id="WP_004599755.1">
    <property type="nucleotide sequence ID" value="NC_000963.1"/>
</dbReference>
<dbReference type="SMR" id="O05942"/>
<dbReference type="STRING" id="272947.gene:17555207"/>
<dbReference type="EnsemblBacteria" id="CAA14593">
    <property type="protein sequence ID" value="CAA14593"/>
    <property type="gene ID" value="CAA14593"/>
</dbReference>
<dbReference type="KEGG" id="rpr:RP124"/>
<dbReference type="PATRIC" id="fig|272947.5.peg.126"/>
<dbReference type="eggNOG" id="COG0265">
    <property type="taxonomic scope" value="Bacteria"/>
</dbReference>
<dbReference type="HOGENOM" id="CLU_020120_1_0_5"/>
<dbReference type="OrthoDB" id="9758917at2"/>
<dbReference type="Proteomes" id="UP000002480">
    <property type="component" value="Chromosome"/>
</dbReference>
<dbReference type="GO" id="GO:0030288">
    <property type="term" value="C:outer membrane-bounded periplasmic space"/>
    <property type="evidence" value="ECO:0000250"/>
    <property type="project" value="UniProtKB"/>
</dbReference>
<dbReference type="GO" id="GO:0004252">
    <property type="term" value="F:serine-type endopeptidase activity"/>
    <property type="evidence" value="ECO:0000250"/>
    <property type="project" value="UniProtKB"/>
</dbReference>
<dbReference type="GO" id="GO:0006508">
    <property type="term" value="P:proteolysis"/>
    <property type="evidence" value="ECO:0007669"/>
    <property type="project" value="UniProtKB-KW"/>
</dbReference>
<dbReference type="CDD" id="cd10839">
    <property type="entry name" value="cpPDZ1_DegP-like"/>
    <property type="match status" value="1"/>
</dbReference>
<dbReference type="FunFam" id="2.30.42.10:FF:000383">
    <property type="match status" value="1"/>
</dbReference>
<dbReference type="FunFam" id="2.40.10.120:FF:000007">
    <property type="entry name" value="Periplasmic serine endoprotease DegP-like"/>
    <property type="match status" value="1"/>
</dbReference>
<dbReference type="FunFam" id="2.30.42.60:FF:000001">
    <property type="entry name" value="Probable periplasmic serine endoprotease DegP-like"/>
    <property type="match status" value="1"/>
</dbReference>
<dbReference type="Gene3D" id="2.30.42.10">
    <property type="match status" value="1"/>
</dbReference>
<dbReference type="Gene3D" id="2.30.42.60">
    <property type="match status" value="1"/>
</dbReference>
<dbReference type="Gene3D" id="2.40.10.120">
    <property type="match status" value="1"/>
</dbReference>
<dbReference type="InterPro" id="IPR001478">
    <property type="entry name" value="PDZ"/>
</dbReference>
<dbReference type="InterPro" id="IPR036034">
    <property type="entry name" value="PDZ_sf"/>
</dbReference>
<dbReference type="InterPro" id="IPR011782">
    <property type="entry name" value="Pept_S1C_Do"/>
</dbReference>
<dbReference type="InterPro" id="IPR009003">
    <property type="entry name" value="Peptidase_S1_PA"/>
</dbReference>
<dbReference type="InterPro" id="IPR001940">
    <property type="entry name" value="Peptidase_S1C"/>
</dbReference>
<dbReference type="NCBIfam" id="TIGR02037">
    <property type="entry name" value="degP_htrA_DO"/>
    <property type="match status" value="1"/>
</dbReference>
<dbReference type="PANTHER" id="PTHR22939:SF130">
    <property type="entry name" value="PERIPLASMIC SERINE ENDOPROTEASE DEGP-LIKE-RELATED"/>
    <property type="match status" value="1"/>
</dbReference>
<dbReference type="PANTHER" id="PTHR22939">
    <property type="entry name" value="SERINE PROTEASE FAMILY S1C HTRA-RELATED"/>
    <property type="match status" value="1"/>
</dbReference>
<dbReference type="Pfam" id="PF13180">
    <property type="entry name" value="PDZ_2"/>
    <property type="match status" value="1"/>
</dbReference>
<dbReference type="Pfam" id="PF13365">
    <property type="entry name" value="Trypsin_2"/>
    <property type="match status" value="1"/>
</dbReference>
<dbReference type="PRINTS" id="PR00834">
    <property type="entry name" value="PROTEASES2C"/>
</dbReference>
<dbReference type="SMART" id="SM00228">
    <property type="entry name" value="PDZ"/>
    <property type="match status" value="2"/>
</dbReference>
<dbReference type="SUPFAM" id="SSF50156">
    <property type="entry name" value="PDZ domain-like"/>
    <property type="match status" value="1"/>
</dbReference>
<dbReference type="SUPFAM" id="SSF50494">
    <property type="entry name" value="Trypsin-like serine proteases"/>
    <property type="match status" value="1"/>
</dbReference>
<dbReference type="PROSITE" id="PS50106">
    <property type="entry name" value="PDZ"/>
    <property type="match status" value="1"/>
</dbReference>
<accession>O05942</accession>
<organism>
    <name type="scientific">Rickettsia prowazekii (strain Madrid E)</name>
    <dbReference type="NCBI Taxonomy" id="272947"/>
    <lineage>
        <taxon>Bacteria</taxon>
        <taxon>Pseudomonadati</taxon>
        <taxon>Pseudomonadota</taxon>
        <taxon>Alphaproteobacteria</taxon>
        <taxon>Rickettsiales</taxon>
        <taxon>Rickettsiaceae</taxon>
        <taxon>Rickettsieae</taxon>
        <taxon>Rickettsia</taxon>
        <taxon>typhus group</taxon>
    </lineage>
</organism>
<comment type="function">
    <text evidence="1">Might be efficient in the degradation of transiently denatured and unfolded proteins which accumulate in the periplasm following stress conditions.</text>
</comment>
<comment type="catalytic activity">
    <reaction>
        <text>Acts on substrates that are at least partially unfolded. The cleavage site P1 residue is normally between a pair of hydrophobic residues, such as Val-|-Val.</text>
        <dbReference type="EC" id="3.4.21.107"/>
    </reaction>
</comment>
<comment type="subcellular location">
    <subcellularLocation>
        <location evidence="4">Periplasm</location>
    </subcellularLocation>
</comment>
<comment type="similarity">
    <text evidence="4">Belongs to the peptidase S1C family.</text>
</comment>
<reference key="1">
    <citation type="journal article" date="1998" name="Nature">
        <title>The genome sequence of Rickettsia prowazekii and the origin of mitochondria.</title>
        <authorList>
            <person name="Andersson S.G.E."/>
            <person name="Zomorodipour A."/>
            <person name="Andersson J.O."/>
            <person name="Sicheritz-Ponten T."/>
            <person name="Alsmark U.C.M."/>
            <person name="Podowski R.M."/>
            <person name="Naeslund A.K."/>
            <person name="Eriksson A.-S."/>
            <person name="Winkler H.H."/>
            <person name="Kurland C.G."/>
        </authorList>
    </citation>
    <scope>NUCLEOTIDE SEQUENCE [LARGE SCALE GENOMIC DNA]</scope>
    <source>
        <strain>Madrid E</strain>
    </source>
</reference>
<reference key="2">
    <citation type="journal article" date="1997" name="Microbiology">
        <title>Genomic rearrangements during evolution of the obligate intracellular parasite Rickettsia prowazekii as inferred from an analysis of 52015 bp nucleotide sequence.</title>
        <authorList>
            <person name="Andersson J.O."/>
            <person name="Andersson S.G.E."/>
        </authorList>
    </citation>
    <scope>NUCLEOTIDE SEQUENCE [GENOMIC DNA] OF 161-513</scope>
    <source>
        <strain>Madrid E</strain>
    </source>
</reference>
<keyword id="KW-0378">Hydrolase</keyword>
<keyword id="KW-0574">Periplasm</keyword>
<keyword id="KW-0645">Protease</keyword>
<keyword id="KW-1185">Reference proteome</keyword>
<keyword id="KW-0677">Repeat</keyword>
<keyword id="KW-0720">Serine protease</keyword>
<keyword id="KW-0732">Signal</keyword>
<keyword id="KW-0346">Stress response</keyword>
<proteinExistence type="inferred from homology"/>
<sequence>MVNLKIFLIVIVLMFNNIILAKENSNALKVVDQEENEFTAINSAPLKISEAARYSFADIVEPLIPAVVNISTIEYVNDKSENSEKDLLQENKHLGFMSDVLEKLNIPLNLEEIAKTPKSIPLGSGFIIAPNGLIVTNYHVIANVEKINIKLADNTEFLAKLIGSDSKTDLALLKIDSEEPLPFVEFGDSNDARVGDWVIAIGNPFGNLGGTVTSGIISSKGRDIDVDTDNIVDNFIQTDAAINNGNSGGPMFNLDQKVIGVNTAIFSPLGTNIGIGFAIPSNTAKPIIERLKKDGKVSRGRLGVTIQDLTEEISEVLGFKGTNGVLVSKVQENGPGYKAGIKKGDIIIKFGDRLVKNTKKLRVIIADTPINQEVKLKILRDAQELELPIKVTADNEEVINDSTEETNKAVIINKKENNLSITKNNITFSNLTEELRKKYDIPQDKTGIVIINIDEEESVFKLGDLITNINHDSIDDIRKLEVLYENAKKLEKQNILLLIERGDTSVFIPLSVS</sequence>
<evidence type="ECO:0000250" key="1"/>
<evidence type="ECO:0000255" key="2"/>
<evidence type="ECO:0000255" key="3">
    <source>
        <dbReference type="PROSITE-ProRule" id="PRU00143"/>
    </source>
</evidence>
<evidence type="ECO:0000305" key="4"/>